<keyword id="KW-1185">Reference proteome</keyword>
<keyword id="KW-0694">RNA-binding</keyword>
<keyword id="KW-0804">Transcription</keyword>
<keyword id="KW-0889">Transcription antitermination</keyword>
<keyword id="KW-0805">Transcription regulation</keyword>
<gene>
    <name evidence="1" type="primary">nusB</name>
    <name type="ordered locus">sll0271</name>
</gene>
<sequence>MLARQQPRRVARELSLLSLSQLSRKDTKPETLEQGDLEALLLAATRTLSGEVHEILETASAELSRSHERLLNSEIRASNLNSAKAMLEEAMTLTETVINRLALAVDLPETLQLAGQMEVRKFALELIGTVCRRRQQIDEQLQEAMVDWQLSRLAKIDQDILRLAIAELDYLGVPQKVAINEAVELAKRYSGQDGHRFINGVLRRVTEKKTDGAPVTPGEPR</sequence>
<feature type="chain" id="PRO_0000176598" description="Transcription antitermination protein NusB">
    <location>
        <begin position="1"/>
        <end position="221"/>
    </location>
</feature>
<dbReference type="EMBL" id="BA000022">
    <property type="protein sequence ID" value="BAA18492.1"/>
    <property type="status" value="ALT_INIT"/>
    <property type="molecule type" value="Genomic_DNA"/>
</dbReference>
<dbReference type="PIR" id="S76233">
    <property type="entry name" value="S76233"/>
</dbReference>
<dbReference type="SMR" id="P74395"/>
<dbReference type="IntAct" id="P74395">
    <property type="interactions" value="1"/>
</dbReference>
<dbReference type="STRING" id="1148.gene:10499373"/>
<dbReference type="PaxDb" id="1148-1653579"/>
<dbReference type="EnsemblBacteria" id="BAA18492">
    <property type="protein sequence ID" value="BAA18492"/>
    <property type="gene ID" value="BAA18492"/>
</dbReference>
<dbReference type="KEGG" id="syn:sll0271"/>
<dbReference type="eggNOG" id="COG0781">
    <property type="taxonomic scope" value="Bacteria"/>
</dbReference>
<dbReference type="InParanoid" id="P74395"/>
<dbReference type="PhylomeDB" id="P74395"/>
<dbReference type="Proteomes" id="UP000001425">
    <property type="component" value="Chromosome"/>
</dbReference>
<dbReference type="GO" id="GO:0005829">
    <property type="term" value="C:cytosol"/>
    <property type="evidence" value="ECO:0000318"/>
    <property type="project" value="GO_Central"/>
</dbReference>
<dbReference type="GO" id="GO:0003723">
    <property type="term" value="F:RNA binding"/>
    <property type="evidence" value="ECO:0007669"/>
    <property type="project" value="UniProtKB-UniRule"/>
</dbReference>
<dbReference type="GO" id="GO:0006353">
    <property type="term" value="P:DNA-templated transcription termination"/>
    <property type="evidence" value="ECO:0007669"/>
    <property type="project" value="UniProtKB-UniRule"/>
</dbReference>
<dbReference type="GO" id="GO:0031564">
    <property type="term" value="P:transcription antitermination"/>
    <property type="evidence" value="ECO:0007669"/>
    <property type="project" value="UniProtKB-KW"/>
</dbReference>
<dbReference type="CDD" id="cd00619">
    <property type="entry name" value="Terminator_NusB"/>
    <property type="match status" value="1"/>
</dbReference>
<dbReference type="Gene3D" id="1.10.940.10">
    <property type="entry name" value="NusB-like"/>
    <property type="match status" value="1"/>
</dbReference>
<dbReference type="HAMAP" id="MF_00073">
    <property type="entry name" value="NusB"/>
    <property type="match status" value="1"/>
</dbReference>
<dbReference type="InterPro" id="IPR035926">
    <property type="entry name" value="NusB-like_sf"/>
</dbReference>
<dbReference type="InterPro" id="IPR011605">
    <property type="entry name" value="NusB_fam"/>
</dbReference>
<dbReference type="InterPro" id="IPR006027">
    <property type="entry name" value="NusB_RsmB_TIM44"/>
</dbReference>
<dbReference type="NCBIfam" id="TIGR01951">
    <property type="entry name" value="nusB"/>
    <property type="match status" value="1"/>
</dbReference>
<dbReference type="PANTHER" id="PTHR11078:SF3">
    <property type="entry name" value="ANTITERMINATION NUSB DOMAIN-CONTAINING PROTEIN"/>
    <property type="match status" value="1"/>
</dbReference>
<dbReference type="PANTHER" id="PTHR11078">
    <property type="entry name" value="N UTILIZATION SUBSTANCE PROTEIN B-RELATED"/>
    <property type="match status" value="1"/>
</dbReference>
<dbReference type="Pfam" id="PF01029">
    <property type="entry name" value="NusB"/>
    <property type="match status" value="1"/>
</dbReference>
<dbReference type="SUPFAM" id="SSF48013">
    <property type="entry name" value="NusB-like"/>
    <property type="match status" value="1"/>
</dbReference>
<protein>
    <recommendedName>
        <fullName evidence="1">Transcription antitermination protein NusB</fullName>
    </recommendedName>
    <alternativeName>
        <fullName evidence="1">Antitermination factor NusB</fullName>
    </alternativeName>
</protein>
<evidence type="ECO:0000255" key="1">
    <source>
        <dbReference type="HAMAP-Rule" id="MF_00073"/>
    </source>
</evidence>
<evidence type="ECO:0000305" key="2"/>
<organism>
    <name type="scientific">Synechocystis sp. (strain ATCC 27184 / PCC 6803 / Kazusa)</name>
    <dbReference type="NCBI Taxonomy" id="1111708"/>
    <lineage>
        <taxon>Bacteria</taxon>
        <taxon>Bacillati</taxon>
        <taxon>Cyanobacteriota</taxon>
        <taxon>Cyanophyceae</taxon>
        <taxon>Synechococcales</taxon>
        <taxon>Merismopediaceae</taxon>
        <taxon>Synechocystis</taxon>
    </lineage>
</organism>
<name>NUSB_SYNY3</name>
<proteinExistence type="inferred from homology"/>
<reference key="1">
    <citation type="journal article" date="1996" name="DNA Res.">
        <title>Sequence analysis of the genome of the unicellular cyanobacterium Synechocystis sp. strain PCC6803. II. Sequence determination of the entire genome and assignment of potential protein-coding regions.</title>
        <authorList>
            <person name="Kaneko T."/>
            <person name="Sato S."/>
            <person name="Kotani H."/>
            <person name="Tanaka A."/>
            <person name="Asamizu E."/>
            <person name="Nakamura Y."/>
            <person name="Miyajima N."/>
            <person name="Hirosawa M."/>
            <person name="Sugiura M."/>
            <person name="Sasamoto S."/>
            <person name="Kimura T."/>
            <person name="Hosouchi T."/>
            <person name="Matsuno A."/>
            <person name="Muraki A."/>
            <person name="Nakazaki N."/>
            <person name="Naruo K."/>
            <person name="Okumura S."/>
            <person name="Shimpo S."/>
            <person name="Takeuchi C."/>
            <person name="Wada T."/>
            <person name="Watanabe A."/>
            <person name="Yamada M."/>
            <person name="Yasuda M."/>
            <person name="Tabata S."/>
        </authorList>
    </citation>
    <scope>NUCLEOTIDE SEQUENCE [LARGE SCALE GENOMIC DNA]</scope>
    <source>
        <strain>ATCC 27184 / PCC 6803 / Kazusa</strain>
    </source>
</reference>
<accession>P74395</accession>
<comment type="function">
    <text evidence="1">Involved in transcription antitermination. Required for transcription of ribosomal RNA (rRNA) genes. Binds specifically to the boxA antiterminator sequence of the ribosomal RNA (rrn) operons.</text>
</comment>
<comment type="similarity">
    <text evidence="1 2">Belongs to the NusB family.</text>
</comment>
<comment type="sequence caution" evidence="2">
    <conflict type="erroneous initiation">
        <sequence resource="EMBL-CDS" id="BAA18492"/>
    </conflict>
</comment>